<sequence>MRIVLDASGGDHAPQATVAGAIAAARTWGDQIILVGDEASIRAELAKHDTSNLDLPVVNAPEMIEMTEHPAQAIRRKRNSSVAIGLRLVRDGEADAFVSAGHSGATMAGALFILGRIRGIERPCLVTHFPTVHGHALLLDSGATTDCKPEYLVQFAQMGNVYAQKIVNIAMPRIGLLANGEEANKGDKLVQDTHVLLQQRSDLTFIGNVEPKDMLINGSADVVVADGFVGNLVLKFGEGVFKMITTAASNNIKAEWRKNLVLGLLPALVALTLPGKGRWRALIAGLTGLTLPASMAVAPLLALRKRMDYRSHGGAPLLGVNGIAIVAHGKSDALAIQNAIGQARNAVEQRVVATISHALETVELVPSA</sequence>
<comment type="function">
    <text evidence="1">Catalyzes the reversible formation of acyl-phosphate (acyl-PO(4)) from acyl-[acyl-carrier-protein] (acyl-ACP). This enzyme utilizes acyl-ACP as fatty acyl donor, but not acyl-CoA.</text>
</comment>
<comment type="catalytic activity">
    <reaction evidence="1">
        <text>a fatty acyl-[ACP] + phosphate = an acyl phosphate + holo-[ACP]</text>
        <dbReference type="Rhea" id="RHEA:42292"/>
        <dbReference type="Rhea" id="RHEA-COMP:9685"/>
        <dbReference type="Rhea" id="RHEA-COMP:14125"/>
        <dbReference type="ChEBI" id="CHEBI:43474"/>
        <dbReference type="ChEBI" id="CHEBI:59918"/>
        <dbReference type="ChEBI" id="CHEBI:64479"/>
        <dbReference type="ChEBI" id="CHEBI:138651"/>
        <dbReference type="EC" id="2.3.1.274"/>
    </reaction>
</comment>
<comment type="pathway">
    <text evidence="1">Lipid metabolism; phospholipid metabolism.</text>
</comment>
<comment type="subunit">
    <text evidence="1">Homodimer. Probably interacts with PlsY.</text>
</comment>
<comment type="subcellular location">
    <subcellularLocation>
        <location evidence="1">Cytoplasm</location>
    </subcellularLocation>
    <text evidence="1">Associated with the membrane possibly through PlsY.</text>
</comment>
<comment type="similarity">
    <text evidence="1">Belongs to the PlsX family.</text>
</comment>
<evidence type="ECO:0000255" key="1">
    <source>
        <dbReference type="HAMAP-Rule" id="MF_00019"/>
    </source>
</evidence>
<dbReference type="EC" id="2.3.1.274" evidence="1"/>
<dbReference type="EMBL" id="CP000875">
    <property type="protein sequence ID" value="ABX03503.1"/>
    <property type="molecule type" value="Genomic_DNA"/>
</dbReference>
<dbReference type="SMR" id="A9AYC1"/>
<dbReference type="FunCoup" id="A9AYC1">
    <property type="interactions" value="290"/>
</dbReference>
<dbReference type="STRING" id="316274.Haur_0855"/>
<dbReference type="KEGG" id="hau:Haur_0855"/>
<dbReference type="eggNOG" id="COG0416">
    <property type="taxonomic scope" value="Bacteria"/>
</dbReference>
<dbReference type="HOGENOM" id="CLU_039379_1_1_0"/>
<dbReference type="InParanoid" id="A9AYC1"/>
<dbReference type="UniPathway" id="UPA00085"/>
<dbReference type="Proteomes" id="UP000000787">
    <property type="component" value="Chromosome"/>
</dbReference>
<dbReference type="GO" id="GO:0005737">
    <property type="term" value="C:cytoplasm"/>
    <property type="evidence" value="ECO:0007669"/>
    <property type="project" value="UniProtKB-SubCell"/>
</dbReference>
<dbReference type="GO" id="GO:0043811">
    <property type="term" value="F:phosphate:acyl-[acyl carrier protein] acyltransferase activity"/>
    <property type="evidence" value="ECO:0007669"/>
    <property type="project" value="UniProtKB-UniRule"/>
</dbReference>
<dbReference type="GO" id="GO:0006633">
    <property type="term" value="P:fatty acid biosynthetic process"/>
    <property type="evidence" value="ECO:0007669"/>
    <property type="project" value="UniProtKB-UniRule"/>
</dbReference>
<dbReference type="GO" id="GO:0008654">
    <property type="term" value="P:phospholipid biosynthetic process"/>
    <property type="evidence" value="ECO:0007669"/>
    <property type="project" value="UniProtKB-KW"/>
</dbReference>
<dbReference type="Gene3D" id="3.40.718.10">
    <property type="entry name" value="Isopropylmalate Dehydrogenase"/>
    <property type="match status" value="2"/>
</dbReference>
<dbReference type="HAMAP" id="MF_00019">
    <property type="entry name" value="PlsX"/>
    <property type="match status" value="1"/>
</dbReference>
<dbReference type="InterPro" id="IPR003664">
    <property type="entry name" value="FA_synthesis"/>
</dbReference>
<dbReference type="InterPro" id="IPR012281">
    <property type="entry name" value="Phospholipid_synth_PlsX-like"/>
</dbReference>
<dbReference type="NCBIfam" id="TIGR00182">
    <property type="entry name" value="plsX"/>
    <property type="match status" value="1"/>
</dbReference>
<dbReference type="PANTHER" id="PTHR30100">
    <property type="entry name" value="FATTY ACID/PHOSPHOLIPID SYNTHESIS PROTEIN PLSX"/>
    <property type="match status" value="1"/>
</dbReference>
<dbReference type="PANTHER" id="PTHR30100:SF1">
    <property type="entry name" value="PHOSPHATE ACYLTRANSFERASE"/>
    <property type="match status" value="1"/>
</dbReference>
<dbReference type="Pfam" id="PF02504">
    <property type="entry name" value="FA_synthesis"/>
    <property type="match status" value="2"/>
</dbReference>
<dbReference type="PIRSF" id="PIRSF002465">
    <property type="entry name" value="Phsphlp_syn_PlsX"/>
    <property type="match status" value="1"/>
</dbReference>
<dbReference type="SUPFAM" id="SSF53659">
    <property type="entry name" value="Isocitrate/Isopropylmalate dehydrogenase-like"/>
    <property type="match status" value="2"/>
</dbReference>
<organism>
    <name type="scientific">Herpetosiphon aurantiacus (strain ATCC 23779 / DSM 785 / 114-95)</name>
    <dbReference type="NCBI Taxonomy" id="316274"/>
    <lineage>
        <taxon>Bacteria</taxon>
        <taxon>Bacillati</taxon>
        <taxon>Chloroflexota</taxon>
        <taxon>Chloroflexia</taxon>
        <taxon>Herpetosiphonales</taxon>
        <taxon>Herpetosiphonaceae</taxon>
        <taxon>Herpetosiphon</taxon>
    </lineage>
</organism>
<gene>
    <name evidence="1" type="primary">plsX</name>
    <name type="ordered locus">Haur_0855</name>
</gene>
<name>PLSX_HERA2</name>
<feature type="chain" id="PRO_1000089915" description="Phosphate acyltransferase">
    <location>
        <begin position="1"/>
        <end position="368"/>
    </location>
</feature>
<proteinExistence type="inferred from homology"/>
<accession>A9AYC1</accession>
<protein>
    <recommendedName>
        <fullName evidence="1">Phosphate acyltransferase</fullName>
        <ecNumber evidence="1">2.3.1.274</ecNumber>
    </recommendedName>
    <alternativeName>
        <fullName evidence="1">Acyl-ACP phosphotransacylase</fullName>
    </alternativeName>
    <alternativeName>
        <fullName evidence="1">Acyl-[acyl-carrier-protein]--phosphate acyltransferase</fullName>
    </alternativeName>
    <alternativeName>
        <fullName evidence="1">Phosphate-acyl-ACP acyltransferase</fullName>
    </alternativeName>
</protein>
<reference key="1">
    <citation type="journal article" date="2011" name="Stand. Genomic Sci.">
        <title>Complete genome sequence of the filamentous gliding predatory bacterium Herpetosiphon aurantiacus type strain (114-95(T)).</title>
        <authorList>
            <person name="Kiss H."/>
            <person name="Nett M."/>
            <person name="Domin N."/>
            <person name="Martin K."/>
            <person name="Maresca J.A."/>
            <person name="Copeland A."/>
            <person name="Lapidus A."/>
            <person name="Lucas S."/>
            <person name="Berry K.W."/>
            <person name="Glavina Del Rio T."/>
            <person name="Dalin E."/>
            <person name="Tice H."/>
            <person name="Pitluck S."/>
            <person name="Richardson P."/>
            <person name="Bruce D."/>
            <person name="Goodwin L."/>
            <person name="Han C."/>
            <person name="Detter J.C."/>
            <person name="Schmutz J."/>
            <person name="Brettin T."/>
            <person name="Land M."/>
            <person name="Hauser L."/>
            <person name="Kyrpides N.C."/>
            <person name="Ivanova N."/>
            <person name="Goeker M."/>
            <person name="Woyke T."/>
            <person name="Klenk H.P."/>
            <person name="Bryant D.A."/>
        </authorList>
    </citation>
    <scope>NUCLEOTIDE SEQUENCE [LARGE SCALE GENOMIC DNA]</scope>
    <source>
        <strain>ATCC 23779 / DSM 785 / 114-95</strain>
    </source>
</reference>
<keyword id="KW-0963">Cytoplasm</keyword>
<keyword id="KW-0444">Lipid biosynthesis</keyword>
<keyword id="KW-0443">Lipid metabolism</keyword>
<keyword id="KW-0594">Phospholipid biosynthesis</keyword>
<keyword id="KW-1208">Phospholipid metabolism</keyword>
<keyword id="KW-0808">Transferase</keyword>